<gene>
    <name evidence="1" type="primary">ahcY</name>
    <name type="ordered locus">XC_3482</name>
</gene>
<feature type="chain" id="PRO_1000024765" description="Adenosylhomocysteinase">
    <location>
        <begin position="1"/>
        <end position="480"/>
    </location>
</feature>
<feature type="binding site" evidence="1">
    <location>
        <position position="63"/>
    </location>
    <ligand>
        <name>substrate</name>
    </ligand>
</feature>
<feature type="binding site" evidence="1">
    <location>
        <position position="142"/>
    </location>
    <ligand>
        <name>substrate</name>
    </ligand>
</feature>
<feature type="binding site" evidence="1">
    <location>
        <position position="203"/>
    </location>
    <ligand>
        <name>substrate</name>
    </ligand>
</feature>
<feature type="binding site" evidence="1">
    <location>
        <begin position="204"/>
        <end position="206"/>
    </location>
    <ligand>
        <name>NAD(+)</name>
        <dbReference type="ChEBI" id="CHEBI:57540"/>
    </ligand>
</feature>
<feature type="binding site" evidence="1">
    <location>
        <position position="233"/>
    </location>
    <ligand>
        <name>substrate</name>
    </ligand>
</feature>
<feature type="binding site" evidence="1">
    <location>
        <position position="237"/>
    </location>
    <ligand>
        <name>substrate</name>
    </ligand>
</feature>
<feature type="binding site" evidence="1">
    <location>
        <position position="238"/>
    </location>
    <ligand>
        <name>NAD(+)</name>
        <dbReference type="ChEBI" id="CHEBI:57540"/>
    </ligand>
</feature>
<feature type="binding site" evidence="1">
    <location>
        <begin position="267"/>
        <end position="272"/>
    </location>
    <ligand>
        <name>NAD(+)</name>
        <dbReference type="ChEBI" id="CHEBI:57540"/>
    </ligand>
</feature>
<feature type="binding site" evidence="1">
    <location>
        <position position="290"/>
    </location>
    <ligand>
        <name>NAD(+)</name>
        <dbReference type="ChEBI" id="CHEBI:57540"/>
    </ligand>
</feature>
<feature type="binding site" evidence="1">
    <location>
        <position position="325"/>
    </location>
    <ligand>
        <name>NAD(+)</name>
        <dbReference type="ChEBI" id="CHEBI:57540"/>
    </ligand>
</feature>
<feature type="binding site" evidence="1">
    <location>
        <begin position="346"/>
        <end position="348"/>
    </location>
    <ligand>
        <name>NAD(+)</name>
        <dbReference type="ChEBI" id="CHEBI:57540"/>
    </ligand>
</feature>
<feature type="binding site" evidence="1">
    <location>
        <position position="394"/>
    </location>
    <ligand>
        <name>NAD(+)</name>
        <dbReference type="ChEBI" id="CHEBI:57540"/>
    </ligand>
</feature>
<protein>
    <recommendedName>
        <fullName evidence="1">Adenosylhomocysteinase</fullName>
        <ecNumber evidence="1">3.13.2.1</ecNumber>
    </recommendedName>
    <alternativeName>
        <fullName evidence="1">S-adenosyl-L-homocysteine hydrolase</fullName>
        <shortName evidence="1">AdoHcyase</shortName>
    </alternativeName>
</protein>
<reference key="1">
    <citation type="journal article" date="2005" name="Genome Res.">
        <title>Comparative and functional genomic analyses of the pathogenicity of phytopathogen Xanthomonas campestris pv. campestris.</title>
        <authorList>
            <person name="Qian W."/>
            <person name="Jia Y."/>
            <person name="Ren S.-X."/>
            <person name="He Y.-Q."/>
            <person name="Feng J.-X."/>
            <person name="Lu L.-F."/>
            <person name="Sun Q."/>
            <person name="Ying G."/>
            <person name="Tang D.-J."/>
            <person name="Tang H."/>
            <person name="Wu W."/>
            <person name="Hao P."/>
            <person name="Wang L."/>
            <person name="Jiang B.-L."/>
            <person name="Zeng S."/>
            <person name="Gu W.-Y."/>
            <person name="Lu G."/>
            <person name="Rong L."/>
            <person name="Tian Y."/>
            <person name="Yao Z."/>
            <person name="Fu G."/>
            <person name="Chen B."/>
            <person name="Fang R."/>
            <person name="Qiang B."/>
            <person name="Chen Z."/>
            <person name="Zhao G.-P."/>
            <person name="Tang J.-L."/>
            <person name="He C."/>
        </authorList>
    </citation>
    <scope>NUCLEOTIDE SEQUENCE [LARGE SCALE GENOMIC DNA]</scope>
    <source>
        <strain>8004</strain>
    </source>
</reference>
<organism>
    <name type="scientific">Xanthomonas campestris pv. campestris (strain 8004)</name>
    <dbReference type="NCBI Taxonomy" id="314565"/>
    <lineage>
        <taxon>Bacteria</taxon>
        <taxon>Pseudomonadati</taxon>
        <taxon>Pseudomonadota</taxon>
        <taxon>Gammaproteobacteria</taxon>
        <taxon>Lysobacterales</taxon>
        <taxon>Lysobacteraceae</taxon>
        <taxon>Xanthomonas</taxon>
    </lineage>
</organism>
<sequence length="480" mass="52629">MNAVAKTVPHTDYKIADISLADWGRKELDIAEHEMPGLMSIRRKHAQTKPLKDVRITGSLHMTIQTAVLIETLKDIGANVRWASCNIFSTQDHAAAAIAATGTPVFAWKGETLEEYWDCTLDALTFTLPDGTLTGPELVVDDGGDVTLLIHKGYELENGSTWVDEPASSHEEGVIKALLKRVAVERPGYWARVVKDWKGVSEETTTGVHRLYQIAEAGKLLIPAINVNDSVTKSKFDNLYGCRESLADGLKRAMDVMLAGKVAVVCGYGDVGKGSAASLRAYGARVIVTEIDPICALQASMEGFEVNTIESTLGRGDIYVTTTGNKDIITVEHLQAMKDQAIVCNIGHFDNEIQVDALNALKGVEKINIKPQVDKYVFGNGNAIFLLADGRLVNLGCATGHPSFVMSNSFANQTLAQIDLWEKRDSYEKKVYILPKHLDEEVARLHLEKIGVKLTTLTKDQADYLGVDVAGPYKPDHYRY</sequence>
<comment type="function">
    <text evidence="1">May play a key role in the regulation of the intracellular concentration of adenosylhomocysteine.</text>
</comment>
<comment type="catalytic activity">
    <reaction evidence="1">
        <text>S-adenosyl-L-homocysteine + H2O = L-homocysteine + adenosine</text>
        <dbReference type="Rhea" id="RHEA:21708"/>
        <dbReference type="ChEBI" id="CHEBI:15377"/>
        <dbReference type="ChEBI" id="CHEBI:16335"/>
        <dbReference type="ChEBI" id="CHEBI:57856"/>
        <dbReference type="ChEBI" id="CHEBI:58199"/>
        <dbReference type="EC" id="3.13.2.1"/>
    </reaction>
</comment>
<comment type="cofactor">
    <cofactor evidence="1">
        <name>NAD(+)</name>
        <dbReference type="ChEBI" id="CHEBI:57540"/>
    </cofactor>
    <text evidence="1">Binds 1 NAD(+) per subunit.</text>
</comment>
<comment type="pathway">
    <text evidence="1">Amino-acid biosynthesis; L-homocysteine biosynthesis; L-homocysteine from S-adenosyl-L-homocysteine: step 1/1.</text>
</comment>
<comment type="subcellular location">
    <subcellularLocation>
        <location evidence="1">Cytoplasm</location>
    </subcellularLocation>
</comment>
<comment type="similarity">
    <text evidence="1">Belongs to the adenosylhomocysteinase family.</text>
</comment>
<evidence type="ECO:0000255" key="1">
    <source>
        <dbReference type="HAMAP-Rule" id="MF_00563"/>
    </source>
</evidence>
<accession>Q4UQZ8</accession>
<name>SAHH_XANC8</name>
<dbReference type="EC" id="3.13.2.1" evidence="1"/>
<dbReference type="EMBL" id="CP000050">
    <property type="protein sequence ID" value="AAY50525.1"/>
    <property type="molecule type" value="Genomic_DNA"/>
</dbReference>
<dbReference type="RefSeq" id="WP_011035988.1">
    <property type="nucleotide sequence ID" value="NZ_CP155948.1"/>
</dbReference>
<dbReference type="SMR" id="Q4UQZ8"/>
<dbReference type="KEGG" id="xcb:XC_3482"/>
<dbReference type="HOGENOM" id="CLU_025194_2_1_6"/>
<dbReference type="UniPathway" id="UPA00314">
    <property type="reaction ID" value="UER00076"/>
</dbReference>
<dbReference type="Proteomes" id="UP000000420">
    <property type="component" value="Chromosome"/>
</dbReference>
<dbReference type="GO" id="GO:0005829">
    <property type="term" value="C:cytosol"/>
    <property type="evidence" value="ECO:0007669"/>
    <property type="project" value="TreeGrafter"/>
</dbReference>
<dbReference type="GO" id="GO:0004013">
    <property type="term" value="F:adenosylhomocysteinase activity"/>
    <property type="evidence" value="ECO:0007669"/>
    <property type="project" value="UniProtKB-UniRule"/>
</dbReference>
<dbReference type="GO" id="GO:0071269">
    <property type="term" value="P:L-homocysteine biosynthetic process"/>
    <property type="evidence" value="ECO:0007669"/>
    <property type="project" value="UniProtKB-UniRule"/>
</dbReference>
<dbReference type="GO" id="GO:0006730">
    <property type="term" value="P:one-carbon metabolic process"/>
    <property type="evidence" value="ECO:0007669"/>
    <property type="project" value="UniProtKB-KW"/>
</dbReference>
<dbReference type="GO" id="GO:0033353">
    <property type="term" value="P:S-adenosylmethionine cycle"/>
    <property type="evidence" value="ECO:0007669"/>
    <property type="project" value="TreeGrafter"/>
</dbReference>
<dbReference type="CDD" id="cd00401">
    <property type="entry name" value="SAHH"/>
    <property type="match status" value="1"/>
</dbReference>
<dbReference type="FunFam" id="3.40.50.720:FF:000004">
    <property type="entry name" value="Adenosylhomocysteinase"/>
    <property type="match status" value="1"/>
</dbReference>
<dbReference type="Gene3D" id="3.40.50.1480">
    <property type="entry name" value="Adenosylhomocysteinase-like"/>
    <property type="match status" value="1"/>
</dbReference>
<dbReference type="Gene3D" id="3.40.50.720">
    <property type="entry name" value="NAD(P)-binding Rossmann-like Domain"/>
    <property type="match status" value="1"/>
</dbReference>
<dbReference type="HAMAP" id="MF_00563">
    <property type="entry name" value="AdoHcyase"/>
    <property type="match status" value="1"/>
</dbReference>
<dbReference type="InterPro" id="IPR042172">
    <property type="entry name" value="Adenosylhomocyst_ase-like_sf"/>
</dbReference>
<dbReference type="InterPro" id="IPR000043">
    <property type="entry name" value="Adenosylhomocysteinase-like"/>
</dbReference>
<dbReference type="InterPro" id="IPR015878">
    <property type="entry name" value="Ado_hCys_hydrolase_NAD-bd"/>
</dbReference>
<dbReference type="InterPro" id="IPR036291">
    <property type="entry name" value="NAD(P)-bd_dom_sf"/>
</dbReference>
<dbReference type="InterPro" id="IPR020082">
    <property type="entry name" value="S-Ado-L-homoCys_hydrolase_CS"/>
</dbReference>
<dbReference type="NCBIfam" id="TIGR00936">
    <property type="entry name" value="ahcY"/>
    <property type="match status" value="1"/>
</dbReference>
<dbReference type="NCBIfam" id="NF004005">
    <property type="entry name" value="PRK05476.2-3"/>
    <property type="match status" value="1"/>
</dbReference>
<dbReference type="PANTHER" id="PTHR23420">
    <property type="entry name" value="ADENOSYLHOMOCYSTEINASE"/>
    <property type="match status" value="1"/>
</dbReference>
<dbReference type="PANTHER" id="PTHR23420:SF0">
    <property type="entry name" value="ADENOSYLHOMOCYSTEINASE"/>
    <property type="match status" value="1"/>
</dbReference>
<dbReference type="Pfam" id="PF05221">
    <property type="entry name" value="AdoHcyase"/>
    <property type="match status" value="1"/>
</dbReference>
<dbReference type="Pfam" id="PF00670">
    <property type="entry name" value="AdoHcyase_NAD"/>
    <property type="match status" value="1"/>
</dbReference>
<dbReference type="PIRSF" id="PIRSF001109">
    <property type="entry name" value="Ad_hcy_hydrolase"/>
    <property type="match status" value="1"/>
</dbReference>
<dbReference type="SMART" id="SM00996">
    <property type="entry name" value="AdoHcyase"/>
    <property type="match status" value="1"/>
</dbReference>
<dbReference type="SMART" id="SM00997">
    <property type="entry name" value="AdoHcyase_NAD"/>
    <property type="match status" value="1"/>
</dbReference>
<dbReference type="SUPFAM" id="SSF52283">
    <property type="entry name" value="Formate/glycerate dehydrogenase catalytic domain-like"/>
    <property type="match status" value="1"/>
</dbReference>
<dbReference type="SUPFAM" id="SSF51735">
    <property type="entry name" value="NAD(P)-binding Rossmann-fold domains"/>
    <property type="match status" value="1"/>
</dbReference>
<dbReference type="PROSITE" id="PS00738">
    <property type="entry name" value="ADOHCYASE_1"/>
    <property type="match status" value="1"/>
</dbReference>
<dbReference type="PROSITE" id="PS00739">
    <property type="entry name" value="ADOHCYASE_2"/>
    <property type="match status" value="1"/>
</dbReference>
<keyword id="KW-0963">Cytoplasm</keyword>
<keyword id="KW-0378">Hydrolase</keyword>
<keyword id="KW-0520">NAD</keyword>
<keyword id="KW-0554">One-carbon metabolism</keyword>
<proteinExistence type="inferred from homology"/>